<evidence type="ECO:0000250" key="1"/>
<evidence type="ECO:0000255" key="2">
    <source>
        <dbReference type="HAMAP-Rule" id="MF_00223"/>
    </source>
</evidence>
<accession>Q7VFG4</accession>
<keyword id="KW-0342">GTP-binding</keyword>
<keyword id="KW-0378">Hydrolase</keyword>
<keyword id="KW-0479">Metal-binding</keyword>
<keyword id="KW-0547">Nucleotide-binding</keyword>
<keyword id="KW-0554">One-carbon metabolism</keyword>
<keyword id="KW-1185">Reference proteome</keyword>
<keyword id="KW-0862">Zinc</keyword>
<name>GCH1_HELHP</name>
<sequence>MHNAKRAIFKKRENMQKSSHDSILECNAQAFFESLCQNVGENPTREGLLHTPKRIASAFSDMLNGYAKSPKQALGSVFEDGVCDEMIVLKKLHFYSICEHHLLPFFGHISIGYIPDKKLVGISGLARLTEVFTHRLQIQERLTAQIADALIAELKPKGAMIVCQARHLCLEMRSNVPQSHIITSALRGLFKKDSRTRAEFMQILKD</sequence>
<gene>
    <name evidence="2" type="primary">folE</name>
    <name type="ordered locus">HH_1712</name>
</gene>
<proteinExistence type="inferred from homology"/>
<reference key="1">
    <citation type="journal article" date="2003" name="Proc. Natl. Acad. Sci. U.S.A.">
        <title>The complete genome sequence of the carcinogenic bacterium Helicobacter hepaticus.</title>
        <authorList>
            <person name="Suerbaum S."/>
            <person name="Josenhans C."/>
            <person name="Sterzenbach T."/>
            <person name="Drescher B."/>
            <person name="Brandt P."/>
            <person name="Bell M."/>
            <person name="Droege M."/>
            <person name="Fartmann B."/>
            <person name="Fischer H.-P."/>
            <person name="Ge Z."/>
            <person name="Hoerster A."/>
            <person name="Holland R."/>
            <person name="Klein K."/>
            <person name="Koenig J."/>
            <person name="Macko L."/>
            <person name="Mendz G.L."/>
            <person name="Nyakatura G."/>
            <person name="Schauer D.B."/>
            <person name="Shen Z."/>
            <person name="Weber J."/>
            <person name="Frosch M."/>
            <person name="Fox J.G."/>
        </authorList>
    </citation>
    <scope>NUCLEOTIDE SEQUENCE [LARGE SCALE GENOMIC DNA]</scope>
    <source>
        <strain>ATCC 51449 / 3B1</strain>
    </source>
</reference>
<dbReference type="EC" id="3.5.4.16" evidence="2"/>
<dbReference type="EMBL" id="AE017125">
    <property type="protein sequence ID" value="AAP78309.1"/>
    <property type="molecule type" value="Genomic_DNA"/>
</dbReference>
<dbReference type="SMR" id="Q7VFG4"/>
<dbReference type="STRING" id="235279.HH_1712"/>
<dbReference type="KEGG" id="hhe:HH_1712"/>
<dbReference type="eggNOG" id="COG0302">
    <property type="taxonomic scope" value="Bacteria"/>
</dbReference>
<dbReference type="HOGENOM" id="CLU_049768_3_1_7"/>
<dbReference type="UniPathway" id="UPA00848">
    <property type="reaction ID" value="UER00151"/>
</dbReference>
<dbReference type="Proteomes" id="UP000002495">
    <property type="component" value="Chromosome"/>
</dbReference>
<dbReference type="GO" id="GO:0005737">
    <property type="term" value="C:cytoplasm"/>
    <property type="evidence" value="ECO:0007669"/>
    <property type="project" value="TreeGrafter"/>
</dbReference>
<dbReference type="GO" id="GO:0005525">
    <property type="term" value="F:GTP binding"/>
    <property type="evidence" value="ECO:0007669"/>
    <property type="project" value="UniProtKB-KW"/>
</dbReference>
<dbReference type="GO" id="GO:0003934">
    <property type="term" value="F:GTP cyclohydrolase I activity"/>
    <property type="evidence" value="ECO:0007669"/>
    <property type="project" value="UniProtKB-UniRule"/>
</dbReference>
<dbReference type="GO" id="GO:0008270">
    <property type="term" value="F:zinc ion binding"/>
    <property type="evidence" value="ECO:0007669"/>
    <property type="project" value="UniProtKB-UniRule"/>
</dbReference>
<dbReference type="GO" id="GO:0006730">
    <property type="term" value="P:one-carbon metabolic process"/>
    <property type="evidence" value="ECO:0007669"/>
    <property type="project" value="UniProtKB-UniRule"/>
</dbReference>
<dbReference type="GO" id="GO:0006729">
    <property type="term" value="P:tetrahydrobiopterin biosynthetic process"/>
    <property type="evidence" value="ECO:0007669"/>
    <property type="project" value="TreeGrafter"/>
</dbReference>
<dbReference type="GO" id="GO:0046654">
    <property type="term" value="P:tetrahydrofolate biosynthetic process"/>
    <property type="evidence" value="ECO:0007669"/>
    <property type="project" value="UniProtKB-UniRule"/>
</dbReference>
<dbReference type="FunFam" id="3.30.1130.10:FF:000001">
    <property type="entry name" value="GTP cyclohydrolase 1"/>
    <property type="match status" value="1"/>
</dbReference>
<dbReference type="Gene3D" id="1.10.286.10">
    <property type="match status" value="1"/>
</dbReference>
<dbReference type="Gene3D" id="3.30.1130.10">
    <property type="match status" value="1"/>
</dbReference>
<dbReference type="HAMAP" id="MF_00223">
    <property type="entry name" value="FolE"/>
    <property type="match status" value="1"/>
</dbReference>
<dbReference type="InterPro" id="IPR043133">
    <property type="entry name" value="GTP-CH-I_C/QueF"/>
</dbReference>
<dbReference type="InterPro" id="IPR043134">
    <property type="entry name" value="GTP-CH-I_N"/>
</dbReference>
<dbReference type="InterPro" id="IPR001474">
    <property type="entry name" value="GTP_CycHdrlase_I"/>
</dbReference>
<dbReference type="InterPro" id="IPR018234">
    <property type="entry name" value="GTP_CycHdrlase_I_CS"/>
</dbReference>
<dbReference type="InterPro" id="IPR020602">
    <property type="entry name" value="GTP_CycHdrlase_I_dom"/>
</dbReference>
<dbReference type="NCBIfam" id="TIGR00063">
    <property type="entry name" value="folE"/>
    <property type="match status" value="1"/>
</dbReference>
<dbReference type="NCBIfam" id="NF006825">
    <property type="entry name" value="PRK09347.1-2"/>
    <property type="match status" value="1"/>
</dbReference>
<dbReference type="NCBIfam" id="NF006826">
    <property type="entry name" value="PRK09347.1-3"/>
    <property type="match status" value="1"/>
</dbReference>
<dbReference type="PANTHER" id="PTHR11109:SF7">
    <property type="entry name" value="GTP CYCLOHYDROLASE 1"/>
    <property type="match status" value="1"/>
</dbReference>
<dbReference type="PANTHER" id="PTHR11109">
    <property type="entry name" value="GTP CYCLOHYDROLASE I"/>
    <property type="match status" value="1"/>
</dbReference>
<dbReference type="Pfam" id="PF01227">
    <property type="entry name" value="GTP_cyclohydroI"/>
    <property type="match status" value="1"/>
</dbReference>
<dbReference type="SUPFAM" id="SSF55620">
    <property type="entry name" value="Tetrahydrobiopterin biosynthesis enzymes-like"/>
    <property type="match status" value="1"/>
</dbReference>
<dbReference type="PROSITE" id="PS00859">
    <property type="entry name" value="GTP_CYCLOHYDROL_1_1"/>
    <property type="match status" value="1"/>
</dbReference>
<organism>
    <name type="scientific">Helicobacter hepaticus (strain ATCC 51449 / 3B1)</name>
    <dbReference type="NCBI Taxonomy" id="235279"/>
    <lineage>
        <taxon>Bacteria</taxon>
        <taxon>Pseudomonadati</taxon>
        <taxon>Campylobacterota</taxon>
        <taxon>Epsilonproteobacteria</taxon>
        <taxon>Campylobacterales</taxon>
        <taxon>Helicobacteraceae</taxon>
        <taxon>Helicobacter</taxon>
    </lineage>
</organism>
<feature type="chain" id="PRO_0000119412" description="GTP cyclohydrolase 1">
    <location>
        <begin position="1"/>
        <end position="206"/>
    </location>
</feature>
<feature type="binding site" evidence="2">
    <location>
        <position position="98"/>
    </location>
    <ligand>
        <name>Zn(2+)</name>
        <dbReference type="ChEBI" id="CHEBI:29105"/>
    </ligand>
</feature>
<feature type="binding site" evidence="2">
    <location>
        <position position="101"/>
    </location>
    <ligand>
        <name>Zn(2+)</name>
        <dbReference type="ChEBI" id="CHEBI:29105"/>
    </ligand>
</feature>
<feature type="binding site" evidence="2">
    <location>
        <position position="169"/>
    </location>
    <ligand>
        <name>Zn(2+)</name>
        <dbReference type="ChEBI" id="CHEBI:29105"/>
    </ligand>
</feature>
<protein>
    <recommendedName>
        <fullName evidence="2">GTP cyclohydrolase 1</fullName>
        <ecNumber evidence="2">3.5.4.16</ecNumber>
    </recommendedName>
    <alternativeName>
        <fullName evidence="2">GTP cyclohydrolase I</fullName>
        <shortName evidence="2">GTP-CH-I</shortName>
    </alternativeName>
</protein>
<comment type="catalytic activity">
    <reaction evidence="2">
        <text>GTP + H2O = 7,8-dihydroneopterin 3'-triphosphate + formate + H(+)</text>
        <dbReference type="Rhea" id="RHEA:17473"/>
        <dbReference type="ChEBI" id="CHEBI:15377"/>
        <dbReference type="ChEBI" id="CHEBI:15378"/>
        <dbReference type="ChEBI" id="CHEBI:15740"/>
        <dbReference type="ChEBI" id="CHEBI:37565"/>
        <dbReference type="ChEBI" id="CHEBI:58462"/>
        <dbReference type="EC" id="3.5.4.16"/>
    </reaction>
</comment>
<comment type="pathway">
    <text evidence="2">Cofactor biosynthesis; 7,8-dihydroneopterin triphosphate biosynthesis; 7,8-dihydroneopterin triphosphate from GTP: step 1/1.</text>
</comment>
<comment type="subunit">
    <text evidence="1">Toroid-shaped homodecamer, composed of two pentamers of five dimers.</text>
</comment>
<comment type="similarity">
    <text evidence="2">Belongs to the GTP cyclohydrolase I family.</text>
</comment>